<accession>O86773</accession>
<keyword id="KW-1185">Reference proteome</keyword>
<keyword id="KW-0687">Ribonucleoprotein</keyword>
<keyword id="KW-0689">Ribosomal protein</keyword>
<keyword id="KW-0694">RNA-binding</keyword>
<keyword id="KW-0699">rRNA-binding</keyword>
<keyword id="KW-0820">tRNA-binding</keyword>
<protein>
    <recommendedName>
        <fullName evidence="1">Small ribosomal subunit protein uS13</fullName>
    </recommendedName>
    <alternativeName>
        <fullName evidence="3">30S ribosomal protein S13</fullName>
    </alternativeName>
</protein>
<organism>
    <name type="scientific">Streptomyces coelicolor (strain ATCC BAA-471 / A3(2) / M145)</name>
    <dbReference type="NCBI Taxonomy" id="100226"/>
    <lineage>
        <taxon>Bacteria</taxon>
        <taxon>Bacillati</taxon>
        <taxon>Actinomycetota</taxon>
        <taxon>Actinomycetes</taxon>
        <taxon>Kitasatosporales</taxon>
        <taxon>Streptomycetaceae</taxon>
        <taxon>Streptomyces</taxon>
        <taxon>Streptomyces albidoflavus group</taxon>
    </lineage>
</organism>
<name>RS13_STRCO</name>
<dbReference type="EMBL" id="AL939121">
    <property type="protein sequence ID" value="CAA20383.1"/>
    <property type="molecule type" value="Genomic_DNA"/>
</dbReference>
<dbReference type="PIR" id="T35556">
    <property type="entry name" value="T35556"/>
</dbReference>
<dbReference type="RefSeq" id="NP_628885.1">
    <property type="nucleotide sequence ID" value="NC_003888.3"/>
</dbReference>
<dbReference type="RefSeq" id="WP_003974244.1">
    <property type="nucleotide sequence ID" value="NZ_VNID01000016.1"/>
</dbReference>
<dbReference type="SMR" id="O86773"/>
<dbReference type="FunCoup" id="O86773">
    <property type="interactions" value="464"/>
</dbReference>
<dbReference type="STRING" id="100226.gene:17762376"/>
<dbReference type="PaxDb" id="100226-SCO4727"/>
<dbReference type="GeneID" id="97462931"/>
<dbReference type="KEGG" id="sco:SCO4727"/>
<dbReference type="PATRIC" id="fig|100226.15.peg.4798"/>
<dbReference type="eggNOG" id="COG0099">
    <property type="taxonomic scope" value="Bacteria"/>
</dbReference>
<dbReference type="HOGENOM" id="CLU_103849_1_2_11"/>
<dbReference type="InParanoid" id="O86773"/>
<dbReference type="OrthoDB" id="9803610at2"/>
<dbReference type="PhylomeDB" id="O86773"/>
<dbReference type="Proteomes" id="UP000001973">
    <property type="component" value="Chromosome"/>
</dbReference>
<dbReference type="GO" id="GO:0005829">
    <property type="term" value="C:cytosol"/>
    <property type="evidence" value="ECO:0000318"/>
    <property type="project" value="GO_Central"/>
</dbReference>
<dbReference type="GO" id="GO:0015935">
    <property type="term" value="C:small ribosomal subunit"/>
    <property type="evidence" value="ECO:0000318"/>
    <property type="project" value="GO_Central"/>
</dbReference>
<dbReference type="GO" id="GO:0019843">
    <property type="term" value="F:rRNA binding"/>
    <property type="evidence" value="ECO:0007669"/>
    <property type="project" value="UniProtKB-UniRule"/>
</dbReference>
<dbReference type="GO" id="GO:0003735">
    <property type="term" value="F:structural constituent of ribosome"/>
    <property type="evidence" value="ECO:0007669"/>
    <property type="project" value="InterPro"/>
</dbReference>
<dbReference type="GO" id="GO:0000049">
    <property type="term" value="F:tRNA binding"/>
    <property type="evidence" value="ECO:0007669"/>
    <property type="project" value="UniProtKB-UniRule"/>
</dbReference>
<dbReference type="GO" id="GO:0006412">
    <property type="term" value="P:translation"/>
    <property type="evidence" value="ECO:0007669"/>
    <property type="project" value="UniProtKB-UniRule"/>
</dbReference>
<dbReference type="FunFam" id="1.10.8.50:FF:000001">
    <property type="entry name" value="30S ribosomal protein S13"/>
    <property type="match status" value="1"/>
</dbReference>
<dbReference type="FunFam" id="4.10.910.10:FF:000001">
    <property type="entry name" value="30S ribosomal protein S13"/>
    <property type="match status" value="1"/>
</dbReference>
<dbReference type="Gene3D" id="1.10.8.50">
    <property type="match status" value="1"/>
</dbReference>
<dbReference type="Gene3D" id="4.10.910.10">
    <property type="entry name" value="30s ribosomal protein s13, domain 2"/>
    <property type="match status" value="1"/>
</dbReference>
<dbReference type="HAMAP" id="MF_01315">
    <property type="entry name" value="Ribosomal_uS13"/>
    <property type="match status" value="1"/>
</dbReference>
<dbReference type="InterPro" id="IPR027437">
    <property type="entry name" value="Rbsml_uS13_C"/>
</dbReference>
<dbReference type="InterPro" id="IPR001892">
    <property type="entry name" value="Ribosomal_uS13"/>
</dbReference>
<dbReference type="InterPro" id="IPR010979">
    <property type="entry name" value="Ribosomal_uS13-like_H2TH"/>
</dbReference>
<dbReference type="InterPro" id="IPR019980">
    <property type="entry name" value="Ribosomal_uS13_bac-type"/>
</dbReference>
<dbReference type="InterPro" id="IPR018269">
    <property type="entry name" value="Ribosomal_uS13_CS"/>
</dbReference>
<dbReference type="NCBIfam" id="TIGR03631">
    <property type="entry name" value="uS13_bact"/>
    <property type="match status" value="1"/>
</dbReference>
<dbReference type="PANTHER" id="PTHR10871">
    <property type="entry name" value="30S RIBOSOMAL PROTEIN S13/40S RIBOSOMAL PROTEIN S18"/>
    <property type="match status" value="1"/>
</dbReference>
<dbReference type="PANTHER" id="PTHR10871:SF1">
    <property type="entry name" value="SMALL RIBOSOMAL SUBUNIT PROTEIN US13M"/>
    <property type="match status" value="1"/>
</dbReference>
<dbReference type="Pfam" id="PF00416">
    <property type="entry name" value="Ribosomal_S13"/>
    <property type="match status" value="1"/>
</dbReference>
<dbReference type="PIRSF" id="PIRSF002134">
    <property type="entry name" value="Ribosomal_S13"/>
    <property type="match status" value="1"/>
</dbReference>
<dbReference type="SUPFAM" id="SSF46946">
    <property type="entry name" value="S13-like H2TH domain"/>
    <property type="match status" value="1"/>
</dbReference>
<dbReference type="PROSITE" id="PS00646">
    <property type="entry name" value="RIBOSOMAL_S13_1"/>
    <property type="match status" value="1"/>
</dbReference>
<dbReference type="PROSITE" id="PS50159">
    <property type="entry name" value="RIBOSOMAL_S13_2"/>
    <property type="match status" value="1"/>
</dbReference>
<evidence type="ECO:0000255" key="1">
    <source>
        <dbReference type="HAMAP-Rule" id="MF_01315"/>
    </source>
</evidence>
<evidence type="ECO:0000256" key="2">
    <source>
        <dbReference type="SAM" id="MobiDB-lite"/>
    </source>
</evidence>
<evidence type="ECO:0000305" key="3"/>
<sequence>MARVSGVDIPREKRVEIALTYVFGIGRTLSQQTLAATGVDPNTRVRDLSEEQLVAIREYVDNNIKTEGDLRREVQADIRRKVEIGTYQGLRHRRGLPVRGQRTSTNARTRKGPRRAIAGKKKPGKK</sequence>
<gene>
    <name evidence="1" type="primary">rpsM</name>
    <name type="ordered locus">SCO4727</name>
    <name type="ORF">SC6G4.05</name>
</gene>
<comment type="function">
    <text evidence="1">Located at the top of the head of the 30S subunit, it contacts several helices of the 16S rRNA. In the 70S ribosome it contacts the 23S rRNA (bridge B1a) and protein L5 of the 50S subunit (bridge B1b), connecting the 2 subunits; these bridges are implicated in subunit movement. Contacts the tRNAs in the A and P-sites.</text>
</comment>
<comment type="subunit">
    <text evidence="1">Part of the 30S ribosomal subunit. Forms a loose heterodimer with protein S19. Forms two bridges to the 50S subunit in the 70S ribosome.</text>
</comment>
<comment type="similarity">
    <text evidence="1">Belongs to the universal ribosomal protein uS13 family.</text>
</comment>
<proteinExistence type="inferred from homology"/>
<feature type="chain" id="PRO_0000132147" description="Small ribosomal subunit protein uS13">
    <location>
        <begin position="1"/>
        <end position="126"/>
    </location>
</feature>
<feature type="region of interest" description="Disordered" evidence="2">
    <location>
        <begin position="91"/>
        <end position="126"/>
    </location>
</feature>
<feature type="compositionally biased region" description="Basic residues" evidence="2">
    <location>
        <begin position="108"/>
        <end position="126"/>
    </location>
</feature>
<reference key="1">
    <citation type="journal article" date="2002" name="Nature">
        <title>Complete genome sequence of the model actinomycete Streptomyces coelicolor A3(2).</title>
        <authorList>
            <person name="Bentley S.D."/>
            <person name="Chater K.F."/>
            <person name="Cerdeno-Tarraga A.-M."/>
            <person name="Challis G.L."/>
            <person name="Thomson N.R."/>
            <person name="James K.D."/>
            <person name="Harris D.E."/>
            <person name="Quail M.A."/>
            <person name="Kieser H."/>
            <person name="Harper D."/>
            <person name="Bateman A."/>
            <person name="Brown S."/>
            <person name="Chandra G."/>
            <person name="Chen C.W."/>
            <person name="Collins M."/>
            <person name="Cronin A."/>
            <person name="Fraser A."/>
            <person name="Goble A."/>
            <person name="Hidalgo J."/>
            <person name="Hornsby T."/>
            <person name="Howarth S."/>
            <person name="Huang C.-H."/>
            <person name="Kieser T."/>
            <person name="Larke L."/>
            <person name="Murphy L.D."/>
            <person name="Oliver K."/>
            <person name="O'Neil S."/>
            <person name="Rabbinowitsch E."/>
            <person name="Rajandream M.A."/>
            <person name="Rutherford K.M."/>
            <person name="Rutter S."/>
            <person name="Seeger K."/>
            <person name="Saunders D."/>
            <person name="Sharp S."/>
            <person name="Squares R."/>
            <person name="Squares S."/>
            <person name="Taylor K."/>
            <person name="Warren T."/>
            <person name="Wietzorrek A."/>
            <person name="Woodward J.R."/>
            <person name="Barrell B.G."/>
            <person name="Parkhill J."/>
            <person name="Hopwood D.A."/>
        </authorList>
    </citation>
    <scope>NUCLEOTIDE SEQUENCE [LARGE SCALE GENOMIC DNA]</scope>
    <source>
        <strain>ATCC BAA-471 / A3(2) / M145</strain>
    </source>
</reference>